<keyword id="KW-0249">Electron transport</keyword>
<keyword id="KW-0349">Heme</keyword>
<keyword id="KW-0408">Iron</keyword>
<keyword id="KW-0472">Membrane</keyword>
<keyword id="KW-0479">Metal-binding</keyword>
<keyword id="KW-0496">Mitochondrion</keyword>
<keyword id="KW-0999">Mitochondrion inner membrane</keyword>
<keyword id="KW-0679">Respiratory chain</keyword>
<keyword id="KW-0812">Transmembrane</keyword>
<keyword id="KW-1133">Transmembrane helix</keyword>
<keyword id="KW-0813">Transport</keyword>
<keyword id="KW-0830">Ubiquinone</keyword>
<sequence>MTNIRKTHPLLKIVNDSLVDLPVPSSVSSWWNFGSLLAACLAVQILTGLFLAMHYTSDTATAFNSVTHICRDVNYGWILRYLHANGASMFFICLYIHIGRGLYYGSYMYSETWNIGILLLFAVMATAFMGYVLPWGQMSFWGATVITNLLSAIPYIGTDLVQWIWGGFSVDKATLTRFFAFHFLLPFIIAALVMVHLLFLHETGSSNPTGIPSDPDMVPFHPYHTIKDILGILMMLTALSMLVLFSPDLLGDPDNYIPANPLNTPPHIKPEWYFLFAYAILRSIPNKLGGVLALVLSILILAIVPLLHTSKQRSMMFRPLSQCMFWLLVADLLTLTWIGGQPVEHPYIIIGQMASILYFTIILLLMPLVSMMENHLLKW</sequence>
<geneLocation type="mitochondrion"/>
<name>CYB_PTEDV</name>
<reference key="1">
    <citation type="journal article" date="2001" name="Mol. Phylogenet. Evol.">
        <title>Molecular systematics of the family Mormoopidae (Chiroptera) based on cytochrome b and recombination activating gene 2 sequences.</title>
        <authorList>
            <person name="Lewis-Oritt N."/>
            <person name="Porter C.A."/>
            <person name="Baker R.J."/>
        </authorList>
    </citation>
    <scope>NUCLEOTIDE SEQUENCE [GENOMIC DNA]</scope>
    <source>
        <strain>Isolate TK 15571</strain>
        <strain>Isolate TK 25127</strain>
        <strain>Isolate TK 27642</strain>
        <strain>Isolate TK 35483</strain>
    </source>
</reference>
<organism>
    <name type="scientific">Pteronotus davyi</name>
    <name type="common">Davy's naked-backed bat</name>
    <dbReference type="NCBI Taxonomy" id="94956"/>
    <lineage>
        <taxon>Eukaryota</taxon>
        <taxon>Metazoa</taxon>
        <taxon>Chordata</taxon>
        <taxon>Craniata</taxon>
        <taxon>Vertebrata</taxon>
        <taxon>Euteleostomi</taxon>
        <taxon>Mammalia</taxon>
        <taxon>Eutheria</taxon>
        <taxon>Laurasiatheria</taxon>
        <taxon>Chiroptera</taxon>
        <taxon>Yangochiroptera</taxon>
        <taxon>Mormoopidae</taxon>
        <taxon>Pteronotus</taxon>
    </lineage>
</organism>
<protein>
    <recommendedName>
        <fullName>Cytochrome b</fullName>
    </recommendedName>
    <alternativeName>
        <fullName>Complex III subunit 3</fullName>
    </alternativeName>
    <alternativeName>
        <fullName>Complex III subunit III</fullName>
    </alternativeName>
    <alternativeName>
        <fullName>Cytochrome b-c1 complex subunit 3</fullName>
    </alternativeName>
    <alternativeName>
        <fullName>Ubiquinol-cytochrome-c reductase complex cytochrome b subunit</fullName>
    </alternativeName>
</protein>
<feature type="chain" id="PRO_0000061457" description="Cytochrome b">
    <location>
        <begin position="1"/>
        <end position="379"/>
    </location>
</feature>
<feature type="transmembrane region" description="Helical" evidence="2">
    <location>
        <begin position="33"/>
        <end position="53"/>
    </location>
</feature>
<feature type="transmembrane region" description="Helical" evidence="2">
    <location>
        <begin position="77"/>
        <end position="98"/>
    </location>
</feature>
<feature type="transmembrane region" description="Helical" evidence="2">
    <location>
        <begin position="113"/>
        <end position="133"/>
    </location>
</feature>
<feature type="transmembrane region" description="Helical" evidence="2">
    <location>
        <begin position="178"/>
        <end position="198"/>
    </location>
</feature>
<feature type="transmembrane region" description="Helical" evidence="2">
    <location>
        <begin position="226"/>
        <end position="246"/>
    </location>
</feature>
<feature type="transmembrane region" description="Helical" evidence="2">
    <location>
        <begin position="288"/>
        <end position="308"/>
    </location>
</feature>
<feature type="transmembrane region" description="Helical" evidence="2">
    <location>
        <begin position="320"/>
        <end position="340"/>
    </location>
</feature>
<feature type="transmembrane region" description="Helical" evidence="2">
    <location>
        <begin position="347"/>
        <end position="367"/>
    </location>
</feature>
<feature type="binding site" description="axial binding residue" evidence="2">
    <location>
        <position position="83"/>
    </location>
    <ligand>
        <name>heme b</name>
        <dbReference type="ChEBI" id="CHEBI:60344"/>
        <label>b562</label>
    </ligand>
    <ligandPart>
        <name>Fe</name>
        <dbReference type="ChEBI" id="CHEBI:18248"/>
    </ligandPart>
</feature>
<feature type="binding site" description="axial binding residue" evidence="2">
    <location>
        <position position="97"/>
    </location>
    <ligand>
        <name>heme b</name>
        <dbReference type="ChEBI" id="CHEBI:60344"/>
        <label>b566</label>
    </ligand>
    <ligandPart>
        <name>Fe</name>
        <dbReference type="ChEBI" id="CHEBI:18248"/>
    </ligandPart>
</feature>
<feature type="binding site" description="axial binding residue" evidence="2">
    <location>
        <position position="182"/>
    </location>
    <ligand>
        <name>heme b</name>
        <dbReference type="ChEBI" id="CHEBI:60344"/>
        <label>b562</label>
    </ligand>
    <ligandPart>
        <name>Fe</name>
        <dbReference type="ChEBI" id="CHEBI:18248"/>
    </ligandPart>
</feature>
<feature type="binding site" description="axial binding residue" evidence="2">
    <location>
        <position position="196"/>
    </location>
    <ligand>
        <name>heme b</name>
        <dbReference type="ChEBI" id="CHEBI:60344"/>
        <label>b566</label>
    </ligand>
    <ligandPart>
        <name>Fe</name>
        <dbReference type="ChEBI" id="CHEBI:18248"/>
    </ligandPart>
</feature>
<feature type="binding site" evidence="2">
    <location>
        <position position="201"/>
    </location>
    <ligand>
        <name>a ubiquinone</name>
        <dbReference type="ChEBI" id="CHEBI:16389"/>
    </ligand>
</feature>
<feature type="sequence variant" description="In strain: Isolate TK 25127.">
    <original>A</original>
    <variation>T</variation>
    <location>
        <position position="39"/>
    </location>
</feature>
<feature type="sequence variant" description="In strain: Isolate TK 15571 and Isolate TK 25127.">
    <original>I</original>
    <variation>V</variation>
    <location>
        <position position="98"/>
    </location>
</feature>
<feature type="sequence variant" description="In strain: Isolate TK 15571 and Isolate TK 25127.">
    <original>M</original>
    <variation>V</variation>
    <location>
        <position position="194"/>
    </location>
</feature>
<feature type="sequence variant" description="In strain: Isolate TK 15571 and Isolate TK 25127.">
    <original>IV</original>
    <variation>VI</variation>
    <location>
        <begin position="303"/>
        <end position="304"/>
    </location>
</feature>
<feature type="sequence variant" description="In strain: Isolate TK 15571.">
    <original>M</original>
    <variation>T</variation>
    <location>
        <position position="316"/>
    </location>
</feature>
<feature type="sequence variant" description="In strain: Isolate TK 15571 and Isolate TK 25127.">
    <original>M</original>
    <variation>V</variation>
    <location>
        <position position="353"/>
    </location>
</feature>
<gene>
    <name type="primary">MT-CYB</name>
    <name type="synonym">COB</name>
    <name type="synonym">CYTB</name>
    <name type="synonym">MTCYB</name>
</gene>
<comment type="function">
    <text evidence="2">Component of the ubiquinol-cytochrome c reductase complex (complex III or cytochrome b-c1 complex) that is part of the mitochondrial respiratory chain. The b-c1 complex mediates electron transfer from ubiquinol to cytochrome c. Contributes to the generation of a proton gradient across the mitochondrial membrane that is then used for ATP synthesis.</text>
</comment>
<comment type="cofactor">
    <cofactor evidence="2">
        <name>heme b</name>
        <dbReference type="ChEBI" id="CHEBI:60344"/>
    </cofactor>
    <text evidence="2">Binds 2 heme b groups non-covalently.</text>
</comment>
<comment type="subunit">
    <text evidence="2">The cytochrome bc1 complex contains 11 subunits: 3 respiratory subunits (MT-CYB, CYC1 and UQCRFS1), 2 core proteins (UQCRC1 and UQCRC2) and 6 low-molecular weight proteins (UQCRH/QCR6, UQCRB/QCR7, UQCRQ/QCR8, UQCR10/QCR9, UQCR11/QCR10 and a cleavage product of UQCRFS1). This cytochrome bc1 complex then forms a dimer.</text>
</comment>
<comment type="subcellular location">
    <subcellularLocation>
        <location evidence="2">Mitochondrion inner membrane</location>
        <topology evidence="2">Multi-pass membrane protein</topology>
    </subcellularLocation>
</comment>
<comment type="miscellaneous">
    <text evidence="1">Heme 1 (or BL or b562) is low-potential and absorbs at about 562 nm, and heme 2 (or BH or b566) is high-potential and absorbs at about 566 nm.</text>
</comment>
<comment type="similarity">
    <text evidence="3 4">Belongs to the cytochrome b family.</text>
</comment>
<comment type="caution">
    <text evidence="2">The full-length protein contains only eight transmembrane helices, not nine as predicted by bioinformatics tools.</text>
</comment>
<accession>Q9B1N0</accession>
<accession>Q9B370</accession>
<accession>Q9B371</accession>
<dbReference type="EMBL" id="AF338669">
    <property type="protein sequence ID" value="AAK21929.1"/>
    <property type="molecule type" value="Genomic_DNA"/>
</dbReference>
<dbReference type="EMBL" id="AF338670">
    <property type="protein sequence ID" value="AAK21930.1"/>
    <property type="molecule type" value="Genomic_DNA"/>
</dbReference>
<dbReference type="EMBL" id="AF338671">
    <property type="protein sequence ID" value="AAK21931.1"/>
    <property type="molecule type" value="Genomic_DNA"/>
</dbReference>
<dbReference type="EMBL" id="AF338672">
    <property type="protein sequence ID" value="AAK21932.1"/>
    <property type="molecule type" value="Genomic_DNA"/>
</dbReference>
<dbReference type="SMR" id="Q9B1N0"/>
<dbReference type="GO" id="GO:0005743">
    <property type="term" value="C:mitochondrial inner membrane"/>
    <property type="evidence" value="ECO:0007669"/>
    <property type="project" value="UniProtKB-SubCell"/>
</dbReference>
<dbReference type="GO" id="GO:0045275">
    <property type="term" value="C:respiratory chain complex III"/>
    <property type="evidence" value="ECO:0007669"/>
    <property type="project" value="InterPro"/>
</dbReference>
<dbReference type="GO" id="GO:0046872">
    <property type="term" value="F:metal ion binding"/>
    <property type="evidence" value="ECO:0007669"/>
    <property type="project" value="UniProtKB-KW"/>
</dbReference>
<dbReference type="GO" id="GO:0008121">
    <property type="term" value="F:ubiquinol-cytochrome-c reductase activity"/>
    <property type="evidence" value="ECO:0007669"/>
    <property type="project" value="InterPro"/>
</dbReference>
<dbReference type="GO" id="GO:0006122">
    <property type="term" value="P:mitochondrial electron transport, ubiquinol to cytochrome c"/>
    <property type="evidence" value="ECO:0007669"/>
    <property type="project" value="TreeGrafter"/>
</dbReference>
<dbReference type="CDD" id="cd00290">
    <property type="entry name" value="cytochrome_b_C"/>
    <property type="match status" value="1"/>
</dbReference>
<dbReference type="CDD" id="cd00284">
    <property type="entry name" value="Cytochrome_b_N"/>
    <property type="match status" value="1"/>
</dbReference>
<dbReference type="FunFam" id="1.20.810.10:FF:000002">
    <property type="entry name" value="Cytochrome b"/>
    <property type="match status" value="1"/>
</dbReference>
<dbReference type="Gene3D" id="1.20.810.10">
    <property type="entry name" value="Cytochrome Bc1 Complex, Chain C"/>
    <property type="match status" value="1"/>
</dbReference>
<dbReference type="InterPro" id="IPR005798">
    <property type="entry name" value="Cyt_b/b6_C"/>
</dbReference>
<dbReference type="InterPro" id="IPR036150">
    <property type="entry name" value="Cyt_b/b6_C_sf"/>
</dbReference>
<dbReference type="InterPro" id="IPR005797">
    <property type="entry name" value="Cyt_b/b6_N"/>
</dbReference>
<dbReference type="InterPro" id="IPR027387">
    <property type="entry name" value="Cytb/b6-like_sf"/>
</dbReference>
<dbReference type="InterPro" id="IPR030689">
    <property type="entry name" value="Cytochrome_b"/>
</dbReference>
<dbReference type="InterPro" id="IPR048260">
    <property type="entry name" value="Cytochrome_b_C_euk/bac"/>
</dbReference>
<dbReference type="InterPro" id="IPR048259">
    <property type="entry name" value="Cytochrome_b_N_euk/bac"/>
</dbReference>
<dbReference type="InterPro" id="IPR016174">
    <property type="entry name" value="Di-haem_cyt_TM"/>
</dbReference>
<dbReference type="PANTHER" id="PTHR19271">
    <property type="entry name" value="CYTOCHROME B"/>
    <property type="match status" value="1"/>
</dbReference>
<dbReference type="PANTHER" id="PTHR19271:SF16">
    <property type="entry name" value="CYTOCHROME B"/>
    <property type="match status" value="1"/>
</dbReference>
<dbReference type="Pfam" id="PF00032">
    <property type="entry name" value="Cytochrom_B_C"/>
    <property type="match status" value="1"/>
</dbReference>
<dbReference type="Pfam" id="PF00033">
    <property type="entry name" value="Cytochrome_B"/>
    <property type="match status" value="1"/>
</dbReference>
<dbReference type="PIRSF" id="PIRSF038885">
    <property type="entry name" value="COB"/>
    <property type="match status" value="1"/>
</dbReference>
<dbReference type="SUPFAM" id="SSF81648">
    <property type="entry name" value="a domain/subunit of cytochrome bc1 complex (Ubiquinol-cytochrome c reductase)"/>
    <property type="match status" value="1"/>
</dbReference>
<dbReference type="SUPFAM" id="SSF81342">
    <property type="entry name" value="Transmembrane di-heme cytochromes"/>
    <property type="match status" value="1"/>
</dbReference>
<dbReference type="PROSITE" id="PS51003">
    <property type="entry name" value="CYTB_CTER"/>
    <property type="match status" value="1"/>
</dbReference>
<dbReference type="PROSITE" id="PS51002">
    <property type="entry name" value="CYTB_NTER"/>
    <property type="match status" value="1"/>
</dbReference>
<evidence type="ECO:0000250" key="1"/>
<evidence type="ECO:0000250" key="2">
    <source>
        <dbReference type="UniProtKB" id="P00157"/>
    </source>
</evidence>
<evidence type="ECO:0000255" key="3">
    <source>
        <dbReference type="PROSITE-ProRule" id="PRU00967"/>
    </source>
</evidence>
<evidence type="ECO:0000255" key="4">
    <source>
        <dbReference type="PROSITE-ProRule" id="PRU00968"/>
    </source>
</evidence>
<proteinExistence type="inferred from homology"/>